<accession>A4YBG0</accession>
<evidence type="ECO:0000255" key="1">
    <source>
        <dbReference type="HAMAP-Rule" id="MF_00142"/>
    </source>
</evidence>
<protein>
    <recommendedName>
        <fullName evidence="1">Iron-sulfur cluster assembly protein CyaY</fullName>
    </recommendedName>
</protein>
<proteinExistence type="inferred from homology"/>
<reference key="1">
    <citation type="submission" date="2007-04" db="EMBL/GenBank/DDBJ databases">
        <title>Complete sequence of Shewanella putrefaciens CN-32.</title>
        <authorList>
            <consortium name="US DOE Joint Genome Institute"/>
            <person name="Copeland A."/>
            <person name="Lucas S."/>
            <person name="Lapidus A."/>
            <person name="Barry K."/>
            <person name="Detter J.C."/>
            <person name="Glavina del Rio T."/>
            <person name="Hammon N."/>
            <person name="Israni S."/>
            <person name="Dalin E."/>
            <person name="Tice H."/>
            <person name="Pitluck S."/>
            <person name="Chain P."/>
            <person name="Malfatti S."/>
            <person name="Shin M."/>
            <person name="Vergez L."/>
            <person name="Schmutz J."/>
            <person name="Larimer F."/>
            <person name="Land M."/>
            <person name="Hauser L."/>
            <person name="Kyrpides N."/>
            <person name="Mikhailova N."/>
            <person name="Romine M.F."/>
            <person name="Fredrickson J."/>
            <person name="Tiedje J."/>
            <person name="Richardson P."/>
        </authorList>
    </citation>
    <scope>NUCLEOTIDE SEQUENCE [LARGE SCALE GENOMIC DNA]</scope>
    <source>
        <strain>CN-32 / ATCC BAA-453</strain>
    </source>
</reference>
<feature type="chain" id="PRO_1000010955" description="Iron-sulfur cluster assembly protein CyaY">
    <location>
        <begin position="1"/>
        <end position="109"/>
    </location>
</feature>
<organism>
    <name type="scientific">Shewanella putrefaciens (strain CN-32 / ATCC BAA-453)</name>
    <dbReference type="NCBI Taxonomy" id="319224"/>
    <lineage>
        <taxon>Bacteria</taxon>
        <taxon>Pseudomonadati</taxon>
        <taxon>Pseudomonadota</taxon>
        <taxon>Gammaproteobacteria</taxon>
        <taxon>Alteromonadales</taxon>
        <taxon>Shewanellaceae</taxon>
        <taxon>Shewanella</taxon>
    </lineage>
</organism>
<gene>
    <name evidence="1" type="primary">cyaY</name>
    <name type="ordered locus">Sputcn32_3585</name>
</gene>
<sequence length="109" mass="12198">MAMTDTEFHQLADDMFQAIESAIETAIDEQDADVDIDASGNVLQLEFVDGSKIVINKQEPLHEIWVATRFGGYHFGFVEGKWLDGRNGGEFMPFVQDSILRQGGIKLSF</sequence>
<keyword id="KW-0408">Iron</keyword>
<keyword id="KW-0479">Metal-binding</keyword>
<comment type="function">
    <text evidence="1">Involved in iron-sulfur (Fe-S) cluster assembly. May act as a regulator of Fe-S biogenesis.</text>
</comment>
<comment type="similarity">
    <text evidence="1">Belongs to the frataxin family.</text>
</comment>
<dbReference type="EMBL" id="CP000681">
    <property type="protein sequence ID" value="ABP77293.1"/>
    <property type="molecule type" value="Genomic_DNA"/>
</dbReference>
<dbReference type="SMR" id="A4YBG0"/>
<dbReference type="STRING" id="319224.Sputcn32_3585"/>
<dbReference type="KEGG" id="spc:Sputcn32_3585"/>
<dbReference type="eggNOG" id="COG1965">
    <property type="taxonomic scope" value="Bacteria"/>
</dbReference>
<dbReference type="HOGENOM" id="CLU_080880_3_0_6"/>
<dbReference type="GO" id="GO:0005829">
    <property type="term" value="C:cytosol"/>
    <property type="evidence" value="ECO:0007669"/>
    <property type="project" value="TreeGrafter"/>
</dbReference>
<dbReference type="GO" id="GO:0008199">
    <property type="term" value="F:ferric iron binding"/>
    <property type="evidence" value="ECO:0007669"/>
    <property type="project" value="InterPro"/>
</dbReference>
<dbReference type="GO" id="GO:0008198">
    <property type="term" value="F:ferrous iron binding"/>
    <property type="evidence" value="ECO:0007669"/>
    <property type="project" value="TreeGrafter"/>
</dbReference>
<dbReference type="GO" id="GO:0016226">
    <property type="term" value="P:iron-sulfur cluster assembly"/>
    <property type="evidence" value="ECO:0007669"/>
    <property type="project" value="UniProtKB-UniRule"/>
</dbReference>
<dbReference type="CDD" id="cd00503">
    <property type="entry name" value="Frataxin"/>
    <property type="match status" value="1"/>
</dbReference>
<dbReference type="FunFam" id="3.30.920.10:FF:000005">
    <property type="entry name" value="Iron-sulfur cluster assembly protein CyaY"/>
    <property type="match status" value="1"/>
</dbReference>
<dbReference type="Gene3D" id="3.30.920.10">
    <property type="entry name" value="Frataxin/CyaY"/>
    <property type="match status" value="1"/>
</dbReference>
<dbReference type="HAMAP" id="MF_00142">
    <property type="entry name" value="CyaY"/>
    <property type="match status" value="1"/>
</dbReference>
<dbReference type="InterPro" id="IPR047584">
    <property type="entry name" value="CyaY"/>
</dbReference>
<dbReference type="InterPro" id="IPR002908">
    <property type="entry name" value="Frataxin/CyaY"/>
</dbReference>
<dbReference type="InterPro" id="IPR036524">
    <property type="entry name" value="Frataxin/CyaY_sf"/>
</dbReference>
<dbReference type="InterPro" id="IPR020895">
    <property type="entry name" value="Frataxin_CS"/>
</dbReference>
<dbReference type="NCBIfam" id="TIGR03421">
    <property type="entry name" value="FeS_CyaY"/>
    <property type="match status" value="1"/>
</dbReference>
<dbReference type="PANTHER" id="PTHR16821">
    <property type="entry name" value="FRATAXIN"/>
    <property type="match status" value="1"/>
</dbReference>
<dbReference type="PANTHER" id="PTHR16821:SF2">
    <property type="entry name" value="FRATAXIN, MITOCHONDRIAL"/>
    <property type="match status" value="1"/>
</dbReference>
<dbReference type="Pfam" id="PF01491">
    <property type="entry name" value="Frataxin_Cyay"/>
    <property type="match status" value="1"/>
</dbReference>
<dbReference type="SMART" id="SM01219">
    <property type="entry name" value="Frataxin_Cyay"/>
    <property type="match status" value="1"/>
</dbReference>
<dbReference type="SUPFAM" id="SSF55387">
    <property type="entry name" value="Frataxin/Nqo15-like"/>
    <property type="match status" value="1"/>
</dbReference>
<dbReference type="PROSITE" id="PS01344">
    <property type="entry name" value="FRATAXIN_1"/>
    <property type="match status" value="1"/>
</dbReference>
<dbReference type="PROSITE" id="PS50810">
    <property type="entry name" value="FRATAXIN_2"/>
    <property type="match status" value="1"/>
</dbReference>
<name>CYAY_SHEPC</name>